<proteinExistence type="inferred from homology"/>
<accession>Q46IA2</accession>
<name>SPEE_PROMT</name>
<protein>
    <recommendedName>
        <fullName evidence="1">Polyamine aminopropyltransferase</fullName>
    </recommendedName>
    <alternativeName>
        <fullName evidence="1">Putrescine aminopropyltransferase</fullName>
        <shortName evidence="1">PAPT</shortName>
    </alternativeName>
    <alternativeName>
        <fullName evidence="1">Spermidine synthase</fullName>
        <shortName evidence="1">SPDS</shortName>
        <shortName evidence="1">SPDSY</shortName>
        <ecNumber evidence="1">2.5.1.16</ecNumber>
    </alternativeName>
</protein>
<keyword id="KW-0963">Cytoplasm</keyword>
<keyword id="KW-0620">Polyamine biosynthesis</keyword>
<keyword id="KW-1185">Reference proteome</keyword>
<keyword id="KW-0745">Spermidine biosynthesis</keyword>
<keyword id="KW-0808">Transferase</keyword>
<evidence type="ECO:0000255" key="1">
    <source>
        <dbReference type="HAMAP-Rule" id="MF_00198"/>
    </source>
</evidence>
<comment type="function">
    <text evidence="1">Catalyzes the irreversible transfer of a propylamine group from the amino donor S-adenosylmethioninamine (decarboxy-AdoMet) to putrescine (1,4-diaminobutane) to yield spermidine.</text>
</comment>
<comment type="catalytic activity">
    <reaction evidence="1">
        <text>S-adenosyl 3-(methylsulfanyl)propylamine + putrescine = S-methyl-5'-thioadenosine + spermidine + H(+)</text>
        <dbReference type="Rhea" id="RHEA:12721"/>
        <dbReference type="ChEBI" id="CHEBI:15378"/>
        <dbReference type="ChEBI" id="CHEBI:17509"/>
        <dbReference type="ChEBI" id="CHEBI:57443"/>
        <dbReference type="ChEBI" id="CHEBI:57834"/>
        <dbReference type="ChEBI" id="CHEBI:326268"/>
        <dbReference type="EC" id="2.5.1.16"/>
    </reaction>
</comment>
<comment type="pathway">
    <text evidence="1">Amine and polyamine biosynthesis; spermidine biosynthesis; spermidine from putrescine: step 1/1.</text>
</comment>
<comment type="subunit">
    <text evidence="1">Homodimer or homotetramer.</text>
</comment>
<comment type="subcellular location">
    <subcellularLocation>
        <location evidence="1">Cytoplasm</location>
    </subcellularLocation>
</comment>
<comment type="similarity">
    <text evidence="1">Belongs to the spermidine/spermine synthase family.</text>
</comment>
<sequence>MNYKLKTRSEWLDEYHQGVRYGLQGKLILEESSPFQKITIYESKRYGKALLLDDCWMTAEKSEKCYHECLIHPALCCSTQIENILIIGGGDGGSARECLKYKEVKSIDLVEIDLRVIELSQKYLPTIGGDAWSDSRLNLQIKNGIDWVKHTQENSYDVIIIDGADPIGPSKELFSNSFLKDCKRILKQGGVLATQSESPESFQKIHINIVKVLREIFDYADPMYGSVSIYPSGLWSWTFASMKQQRYMHPKKSRVKEISENCQIWSTRWQQGAFNSIPAFIERELAKK</sequence>
<reference key="1">
    <citation type="journal article" date="2007" name="PLoS Genet.">
        <title>Patterns and implications of gene gain and loss in the evolution of Prochlorococcus.</title>
        <authorList>
            <person name="Kettler G.C."/>
            <person name="Martiny A.C."/>
            <person name="Huang K."/>
            <person name="Zucker J."/>
            <person name="Coleman M.L."/>
            <person name="Rodrigue S."/>
            <person name="Chen F."/>
            <person name="Lapidus A."/>
            <person name="Ferriera S."/>
            <person name="Johnson J."/>
            <person name="Steglich C."/>
            <person name="Church G.M."/>
            <person name="Richardson P."/>
            <person name="Chisholm S.W."/>
        </authorList>
    </citation>
    <scope>NUCLEOTIDE SEQUENCE [LARGE SCALE GENOMIC DNA]</scope>
    <source>
        <strain>NATL2A</strain>
    </source>
</reference>
<feature type="chain" id="PRO_1000012011" description="Polyamine aminopropyltransferase">
    <location>
        <begin position="1"/>
        <end position="288"/>
    </location>
</feature>
<feature type="domain" description="PABS" evidence="1">
    <location>
        <begin position="9"/>
        <end position="242"/>
    </location>
</feature>
<feature type="active site" description="Proton acceptor" evidence="1">
    <location>
        <position position="162"/>
    </location>
</feature>
<feature type="binding site" evidence="1">
    <location>
        <position position="36"/>
    </location>
    <ligand>
        <name>S-methyl-5'-thioadenosine</name>
        <dbReference type="ChEBI" id="CHEBI:17509"/>
    </ligand>
</feature>
<feature type="binding site" evidence="1">
    <location>
        <position position="67"/>
    </location>
    <ligand>
        <name>spermidine</name>
        <dbReference type="ChEBI" id="CHEBI:57834"/>
    </ligand>
</feature>
<feature type="binding site" evidence="1">
    <location>
        <position position="91"/>
    </location>
    <ligand>
        <name>spermidine</name>
        <dbReference type="ChEBI" id="CHEBI:57834"/>
    </ligand>
</feature>
<feature type="binding site" evidence="1">
    <location>
        <position position="111"/>
    </location>
    <ligand>
        <name>S-methyl-5'-thioadenosine</name>
        <dbReference type="ChEBI" id="CHEBI:17509"/>
    </ligand>
</feature>
<feature type="binding site" evidence="1">
    <location>
        <begin position="143"/>
        <end position="144"/>
    </location>
    <ligand>
        <name>S-methyl-5'-thioadenosine</name>
        <dbReference type="ChEBI" id="CHEBI:17509"/>
    </ligand>
</feature>
<feature type="binding site" evidence="1">
    <location>
        <position position="169"/>
    </location>
    <ligand>
        <name>S-methyl-5'-thioadenosine</name>
        <dbReference type="ChEBI" id="CHEBI:17509"/>
    </ligand>
</feature>
<dbReference type="EC" id="2.5.1.16" evidence="1"/>
<dbReference type="EMBL" id="CP000095">
    <property type="protein sequence ID" value="AAZ58776.1"/>
    <property type="molecule type" value="Genomic_DNA"/>
</dbReference>
<dbReference type="RefSeq" id="WP_011295630.1">
    <property type="nucleotide sequence ID" value="NC_007335.2"/>
</dbReference>
<dbReference type="SMR" id="Q46IA2"/>
<dbReference type="STRING" id="59920.PMN2A_1286"/>
<dbReference type="KEGG" id="pmn:PMN2A_1286"/>
<dbReference type="HOGENOM" id="CLU_048199_0_0_3"/>
<dbReference type="OrthoDB" id="9793120at2"/>
<dbReference type="PhylomeDB" id="Q46IA2"/>
<dbReference type="UniPathway" id="UPA00248">
    <property type="reaction ID" value="UER00314"/>
</dbReference>
<dbReference type="Proteomes" id="UP000002535">
    <property type="component" value="Chromosome"/>
</dbReference>
<dbReference type="GO" id="GO:0005737">
    <property type="term" value="C:cytoplasm"/>
    <property type="evidence" value="ECO:0007669"/>
    <property type="project" value="UniProtKB-SubCell"/>
</dbReference>
<dbReference type="GO" id="GO:0004766">
    <property type="term" value="F:spermidine synthase activity"/>
    <property type="evidence" value="ECO:0007669"/>
    <property type="project" value="UniProtKB-UniRule"/>
</dbReference>
<dbReference type="GO" id="GO:0008295">
    <property type="term" value="P:spermidine biosynthetic process"/>
    <property type="evidence" value="ECO:0007669"/>
    <property type="project" value="UniProtKB-UniRule"/>
</dbReference>
<dbReference type="Gene3D" id="2.30.140.10">
    <property type="entry name" value="Spermidine synthase, tetramerisation domain"/>
    <property type="match status" value="1"/>
</dbReference>
<dbReference type="Gene3D" id="3.40.50.150">
    <property type="entry name" value="Vaccinia Virus protein VP39"/>
    <property type="match status" value="1"/>
</dbReference>
<dbReference type="HAMAP" id="MF_00198">
    <property type="entry name" value="Spermidine_synth"/>
    <property type="match status" value="1"/>
</dbReference>
<dbReference type="InterPro" id="IPR030374">
    <property type="entry name" value="PABS"/>
</dbReference>
<dbReference type="InterPro" id="IPR030373">
    <property type="entry name" value="PABS_CS"/>
</dbReference>
<dbReference type="InterPro" id="IPR029063">
    <property type="entry name" value="SAM-dependent_MTases_sf"/>
</dbReference>
<dbReference type="InterPro" id="IPR001045">
    <property type="entry name" value="Spermi_synthase"/>
</dbReference>
<dbReference type="InterPro" id="IPR035246">
    <property type="entry name" value="Spermidine_synt_N"/>
</dbReference>
<dbReference type="InterPro" id="IPR037163">
    <property type="entry name" value="Spermidine_synt_N_sf"/>
</dbReference>
<dbReference type="NCBIfam" id="NF002010">
    <property type="entry name" value="PRK00811.1"/>
    <property type="match status" value="1"/>
</dbReference>
<dbReference type="PANTHER" id="PTHR11558:SF11">
    <property type="entry name" value="SPERMIDINE SYNTHASE"/>
    <property type="match status" value="1"/>
</dbReference>
<dbReference type="PANTHER" id="PTHR11558">
    <property type="entry name" value="SPERMIDINE/SPERMINE SYNTHASE"/>
    <property type="match status" value="1"/>
</dbReference>
<dbReference type="Pfam" id="PF17284">
    <property type="entry name" value="Spermine_synt_N"/>
    <property type="match status" value="1"/>
</dbReference>
<dbReference type="Pfam" id="PF01564">
    <property type="entry name" value="Spermine_synth"/>
    <property type="match status" value="1"/>
</dbReference>
<dbReference type="SUPFAM" id="SSF53335">
    <property type="entry name" value="S-adenosyl-L-methionine-dependent methyltransferases"/>
    <property type="match status" value="1"/>
</dbReference>
<dbReference type="PROSITE" id="PS01330">
    <property type="entry name" value="PABS_1"/>
    <property type="match status" value="1"/>
</dbReference>
<dbReference type="PROSITE" id="PS51006">
    <property type="entry name" value="PABS_2"/>
    <property type="match status" value="1"/>
</dbReference>
<organism>
    <name type="scientific">Prochlorococcus marinus (strain NATL2A)</name>
    <dbReference type="NCBI Taxonomy" id="59920"/>
    <lineage>
        <taxon>Bacteria</taxon>
        <taxon>Bacillati</taxon>
        <taxon>Cyanobacteriota</taxon>
        <taxon>Cyanophyceae</taxon>
        <taxon>Synechococcales</taxon>
        <taxon>Prochlorococcaceae</taxon>
        <taxon>Prochlorococcus</taxon>
    </lineage>
</organism>
<gene>
    <name evidence="1" type="primary">speE</name>
    <name type="ordered locus">PMN2A_1286</name>
</gene>